<reference key="1">
    <citation type="submission" date="2007-08" db="EMBL/GenBank/DDBJ databases">
        <authorList>
            <consortium name="The Vibrio harveyi Genome Sequencing Project"/>
            <person name="Bassler B."/>
            <person name="Clifton S.W."/>
            <person name="Fulton L."/>
            <person name="Delehaunty K."/>
            <person name="Fronick C."/>
            <person name="Harrison M."/>
            <person name="Markivic C."/>
            <person name="Fulton R."/>
            <person name="Tin-Wollam A.-M."/>
            <person name="Shah N."/>
            <person name="Pepin K."/>
            <person name="Nash W."/>
            <person name="Thiruvilangam P."/>
            <person name="Bhonagiri V."/>
            <person name="Waters C."/>
            <person name="Tu K.C."/>
            <person name="Irgon J."/>
            <person name="Wilson R.K."/>
        </authorList>
    </citation>
    <scope>NUCLEOTIDE SEQUENCE [LARGE SCALE GENOMIC DNA]</scope>
    <source>
        <strain>ATCC BAA-1116 / BB120</strain>
    </source>
</reference>
<feature type="chain" id="PRO_1000008370" description="Translation initiation factor IF-2">
    <location>
        <begin position="1"/>
        <end position="894"/>
    </location>
</feature>
<feature type="domain" description="tr-type G">
    <location>
        <begin position="393"/>
        <end position="562"/>
    </location>
</feature>
<feature type="region of interest" description="Disordered" evidence="3">
    <location>
        <begin position="25"/>
        <end position="304"/>
    </location>
</feature>
<feature type="region of interest" description="G1" evidence="1">
    <location>
        <begin position="402"/>
        <end position="409"/>
    </location>
</feature>
<feature type="region of interest" description="G2" evidence="1">
    <location>
        <begin position="427"/>
        <end position="431"/>
    </location>
</feature>
<feature type="region of interest" description="G3" evidence="1">
    <location>
        <begin position="448"/>
        <end position="451"/>
    </location>
</feature>
<feature type="region of interest" description="G4" evidence="1">
    <location>
        <begin position="502"/>
        <end position="505"/>
    </location>
</feature>
<feature type="region of interest" description="G5" evidence="1">
    <location>
        <begin position="538"/>
        <end position="540"/>
    </location>
</feature>
<feature type="compositionally biased region" description="Basic and acidic residues" evidence="3">
    <location>
        <begin position="33"/>
        <end position="44"/>
    </location>
</feature>
<feature type="compositionally biased region" description="Basic and acidic residues" evidence="3">
    <location>
        <begin position="52"/>
        <end position="62"/>
    </location>
</feature>
<feature type="compositionally biased region" description="Basic and acidic residues" evidence="3">
    <location>
        <begin position="101"/>
        <end position="174"/>
    </location>
</feature>
<feature type="compositionally biased region" description="Basic and acidic residues" evidence="3">
    <location>
        <begin position="184"/>
        <end position="239"/>
    </location>
</feature>
<feature type="compositionally biased region" description="Basic and acidic residues" evidence="3">
    <location>
        <begin position="247"/>
        <end position="263"/>
    </location>
</feature>
<feature type="compositionally biased region" description="Basic residues" evidence="3">
    <location>
        <begin position="283"/>
        <end position="293"/>
    </location>
</feature>
<feature type="binding site" evidence="2">
    <location>
        <begin position="402"/>
        <end position="409"/>
    </location>
    <ligand>
        <name>GTP</name>
        <dbReference type="ChEBI" id="CHEBI:37565"/>
    </ligand>
</feature>
<feature type="binding site" evidence="2">
    <location>
        <begin position="448"/>
        <end position="452"/>
    </location>
    <ligand>
        <name>GTP</name>
        <dbReference type="ChEBI" id="CHEBI:37565"/>
    </ligand>
</feature>
<feature type="binding site" evidence="2">
    <location>
        <begin position="502"/>
        <end position="505"/>
    </location>
    <ligand>
        <name>GTP</name>
        <dbReference type="ChEBI" id="CHEBI:37565"/>
    </ligand>
</feature>
<gene>
    <name evidence="2" type="primary">infB</name>
    <name type="ordered locus">VIBHAR_03396</name>
</gene>
<evidence type="ECO:0000250" key="1"/>
<evidence type="ECO:0000255" key="2">
    <source>
        <dbReference type="HAMAP-Rule" id="MF_00100"/>
    </source>
</evidence>
<evidence type="ECO:0000256" key="3">
    <source>
        <dbReference type="SAM" id="MobiDB-lite"/>
    </source>
</evidence>
<name>IF2_VIBC1</name>
<organism>
    <name type="scientific">Vibrio campbellii (strain ATCC BAA-1116)</name>
    <dbReference type="NCBI Taxonomy" id="2902295"/>
    <lineage>
        <taxon>Bacteria</taxon>
        <taxon>Pseudomonadati</taxon>
        <taxon>Pseudomonadota</taxon>
        <taxon>Gammaproteobacteria</taxon>
        <taxon>Vibrionales</taxon>
        <taxon>Vibrionaceae</taxon>
        <taxon>Vibrio</taxon>
    </lineage>
</organism>
<keyword id="KW-0963">Cytoplasm</keyword>
<keyword id="KW-0342">GTP-binding</keyword>
<keyword id="KW-0396">Initiation factor</keyword>
<keyword id="KW-0547">Nucleotide-binding</keyword>
<keyword id="KW-0648">Protein biosynthesis</keyword>
<sequence>MTQLTVKALSEEIGTPVDRLMEQLADAGMNKASSDHVSDEEKQKLLSHLKKEHGDKSGESEPTRLTLQRKTRSTLSVAAGGGKSKDVQVEVRKKRTYVKRSTIEDDAKREAEEAAKREAEELAKREAEEQAKREAAEKAQREADEKAKREADAKREAEEKAKRAQADKAKKEMNAKNADANTQAKKEADELKRRQEEEAQRKAEQEAAKLVEEARKLAEENEARWSEEETKKKELENSDYHVTTSRYAREAEDAADRKEEGGARRKKKKPAKEEQSRGGRNQRGGKGRNKGKLAKPTSMQHGFDKSATVAKQDVVIGETIVLSELANKMSVKATEVIKVMMKMGAMATINQVIDQETAQLVAEEMGHKVVLRKENELEEAVLSDRDTNAEAVPRAPVVTIMGHVDHGKTSTLDYIRRTHVASGEAGGITQHIGAYHVETDNGMITFLDTPGHAAFTAMRARGAQATDIVVLVVAADDGVMPQTVEAIQHAKAAGVPLIVAVNKIDKEDANPDNVKNELAQYDVIPEEWGGENMFVHISAKQGTNIDGLLEAILLQSEVLELTAVAEGMASGVVVESRLDKGRGPVATVLVQSGTLNKGDIVLCGQEYGRVRAMRDELGKEITEAGPSIPVEILGLSGVPSSGDEATVVRDERKAREVANYRAGKFREVKLARQQKSKLENMFSNMTAGEVAELNVVLKADVQGSVEAIADSLLKLSTDEVKVSIVGSGVGGITETDAVLAEASNAIILGFNVRADASARRAIEAASVDLRYYSIIYQLIDEVKQAMGGMLAPEFKQEIIGLAEVRDVFKSPKLGAIAGCMVTEGLIKRNNPIRVLRDNVVIYEGELESLRRFKDDVQEVKNGYECGIGVKNYNDVRVGDQIEVFEIVEIKRTLD</sequence>
<accession>A7MZI5</accession>
<dbReference type="EMBL" id="CP000789">
    <property type="protein sequence ID" value="ABU72343.1"/>
    <property type="molecule type" value="Genomic_DNA"/>
</dbReference>
<dbReference type="RefSeq" id="WP_012128823.1">
    <property type="nucleotide sequence ID" value="NC_009783.1"/>
</dbReference>
<dbReference type="SMR" id="A7MZI5"/>
<dbReference type="KEGG" id="vha:VIBHAR_03396"/>
<dbReference type="PATRIC" id="fig|338187.25.peg.2800"/>
<dbReference type="Proteomes" id="UP000008152">
    <property type="component" value="Chromosome I"/>
</dbReference>
<dbReference type="GO" id="GO:0005829">
    <property type="term" value="C:cytosol"/>
    <property type="evidence" value="ECO:0007669"/>
    <property type="project" value="TreeGrafter"/>
</dbReference>
<dbReference type="GO" id="GO:0005525">
    <property type="term" value="F:GTP binding"/>
    <property type="evidence" value="ECO:0007669"/>
    <property type="project" value="UniProtKB-KW"/>
</dbReference>
<dbReference type="GO" id="GO:0003924">
    <property type="term" value="F:GTPase activity"/>
    <property type="evidence" value="ECO:0007669"/>
    <property type="project" value="UniProtKB-UniRule"/>
</dbReference>
<dbReference type="GO" id="GO:0097216">
    <property type="term" value="F:guanosine tetraphosphate binding"/>
    <property type="evidence" value="ECO:0007669"/>
    <property type="project" value="UniProtKB-ARBA"/>
</dbReference>
<dbReference type="GO" id="GO:0003743">
    <property type="term" value="F:translation initiation factor activity"/>
    <property type="evidence" value="ECO:0007669"/>
    <property type="project" value="UniProtKB-UniRule"/>
</dbReference>
<dbReference type="CDD" id="cd06503">
    <property type="entry name" value="ATP-synt_Fo_b"/>
    <property type="match status" value="1"/>
</dbReference>
<dbReference type="CDD" id="cd01887">
    <property type="entry name" value="IF2_eIF5B"/>
    <property type="match status" value="1"/>
</dbReference>
<dbReference type="CDD" id="cd03702">
    <property type="entry name" value="IF2_mtIF2_II"/>
    <property type="match status" value="1"/>
</dbReference>
<dbReference type="CDD" id="cd03692">
    <property type="entry name" value="mtIF2_IVc"/>
    <property type="match status" value="1"/>
</dbReference>
<dbReference type="FunFam" id="2.40.30.10:FF:000007">
    <property type="entry name" value="Translation initiation factor IF-2"/>
    <property type="match status" value="1"/>
</dbReference>
<dbReference type="FunFam" id="2.40.30.10:FF:000008">
    <property type="entry name" value="Translation initiation factor IF-2"/>
    <property type="match status" value="1"/>
</dbReference>
<dbReference type="FunFam" id="3.40.50.10050:FF:000001">
    <property type="entry name" value="Translation initiation factor IF-2"/>
    <property type="match status" value="1"/>
</dbReference>
<dbReference type="FunFam" id="3.40.50.300:FF:000019">
    <property type="entry name" value="Translation initiation factor IF-2"/>
    <property type="match status" value="1"/>
</dbReference>
<dbReference type="Gene3D" id="3.40.50.300">
    <property type="entry name" value="P-loop containing nucleotide triphosphate hydrolases"/>
    <property type="match status" value="1"/>
</dbReference>
<dbReference type="Gene3D" id="3.30.56.50">
    <property type="entry name" value="Putative DNA-binding domain, N-terminal subdomain of bacterial translation initiation factor IF2"/>
    <property type="match status" value="1"/>
</dbReference>
<dbReference type="Gene3D" id="2.40.30.10">
    <property type="entry name" value="Translation factors"/>
    <property type="match status" value="2"/>
</dbReference>
<dbReference type="Gene3D" id="3.40.50.10050">
    <property type="entry name" value="Translation initiation factor IF- 2, domain 3"/>
    <property type="match status" value="1"/>
</dbReference>
<dbReference type="HAMAP" id="MF_00100_B">
    <property type="entry name" value="IF_2_B"/>
    <property type="match status" value="1"/>
</dbReference>
<dbReference type="InterPro" id="IPR009061">
    <property type="entry name" value="DNA-bd_dom_put_sf"/>
</dbReference>
<dbReference type="InterPro" id="IPR053905">
    <property type="entry name" value="EF-G-like_DII"/>
</dbReference>
<dbReference type="InterPro" id="IPR004161">
    <property type="entry name" value="EFTu-like_2"/>
</dbReference>
<dbReference type="InterPro" id="IPR013575">
    <property type="entry name" value="IF2_assoc_dom_bac"/>
</dbReference>
<dbReference type="InterPro" id="IPR044145">
    <property type="entry name" value="IF2_II"/>
</dbReference>
<dbReference type="InterPro" id="IPR006847">
    <property type="entry name" value="IF2_N"/>
</dbReference>
<dbReference type="InterPro" id="IPR027417">
    <property type="entry name" value="P-loop_NTPase"/>
</dbReference>
<dbReference type="InterPro" id="IPR005225">
    <property type="entry name" value="Small_GTP-bd"/>
</dbReference>
<dbReference type="InterPro" id="IPR000795">
    <property type="entry name" value="T_Tr_GTP-bd_dom"/>
</dbReference>
<dbReference type="InterPro" id="IPR000178">
    <property type="entry name" value="TF_IF2_bacterial-like"/>
</dbReference>
<dbReference type="InterPro" id="IPR015760">
    <property type="entry name" value="TIF_IF2"/>
</dbReference>
<dbReference type="InterPro" id="IPR023115">
    <property type="entry name" value="TIF_IF2_dom3"/>
</dbReference>
<dbReference type="InterPro" id="IPR036925">
    <property type="entry name" value="TIF_IF2_dom3_sf"/>
</dbReference>
<dbReference type="InterPro" id="IPR009000">
    <property type="entry name" value="Transl_B-barrel_sf"/>
</dbReference>
<dbReference type="NCBIfam" id="TIGR00487">
    <property type="entry name" value="IF-2"/>
    <property type="match status" value="1"/>
</dbReference>
<dbReference type="NCBIfam" id="TIGR00231">
    <property type="entry name" value="small_GTP"/>
    <property type="match status" value="1"/>
</dbReference>
<dbReference type="PANTHER" id="PTHR43381:SF5">
    <property type="entry name" value="TR-TYPE G DOMAIN-CONTAINING PROTEIN"/>
    <property type="match status" value="1"/>
</dbReference>
<dbReference type="PANTHER" id="PTHR43381">
    <property type="entry name" value="TRANSLATION INITIATION FACTOR IF-2-RELATED"/>
    <property type="match status" value="1"/>
</dbReference>
<dbReference type="Pfam" id="PF22042">
    <property type="entry name" value="EF-G_D2"/>
    <property type="match status" value="1"/>
</dbReference>
<dbReference type="Pfam" id="PF00009">
    <property type="entry name" value="GTP_EFTU"/>
    <property type="match status" value="1"/>
</dbReference>
<dbReference type="Pfam" id="PF03144">
    <property type="entry name" value="GTP_EFTU_D2"/>
    <property type="match status" value="1"/>
</dbReference>
<dbReference type="Pfam" id="PF11987">
    <property type="entry name" value="IF-2"/>
    <property type="match status" value="1"/>
</dbReference>
<dbReference type="Pfam" id="PF08364">
    <property type="entry name" value="IF2_assoc"/>
    <property type="match status" value="1"/>
</dbReference>
<dbReference type="Pfam" id="PF04760">
    <property type="entry name" value="IF2_N"/>
    <property type="match status" value="2"/>
</dbReference>
<dbReference type="SUPFAM" id="SSF52156">
    <property type="entry name" value="Initiation factor IF2/eIF5b, domain 3"/>
    <property type="match status" value="1"/>
</dbReference>
<dbReference type="SUPFAM" id="SSF52540">
    <property type="entry name" value="P-loop containing nucleoside triphosphate hydrolases"/>
    <property type="match status" value="1"/>
</dbReference>
<dbReference type="SUPFAM" id="SSF46955">
    <property type="entry name" value="Putative DNA-binding domain"/>
    <property type="match status" value="1"/>
</dbReference>
<dbReference type="SUPFAM" id="SSF50447">
    <property type="entry name" value="Translation proteins"/>
    <property type="match status" value="2"/>
</dbReference>
<dbReference type="PROSITE" id="PS51722">
    <property type="entry name" value="G_TR_2"/>
    <property type="match status" value="1"/>
</dbReference>
<dbReference type="PROSITE" id="PS01176">
    <property type="entry name" value="IF2"/>
    <property type="match status" value="1"/>
</dbReference>
<protein>
    <recommendedName>
        <fullName evidence="2">Translation initiation factor IF-2</fullName>
    </recommendedName>
</protein>
<proteinExistence type="inferred from homology"/>
<comment type="function">
    <text evidence="2">One of the essential components for the initiation of protein synthesis. Protects formylmethionyl-tRNA from spontaneous hydrolysis and promotes its binding to the 30S ribosomal subunits. Also involved in the hydrolysis of GTP during the formation of the 70S ribosomal complex.</text>
</comment>
<comment type="subcellular location">
    <subcellularLocation>
        <location evidence="2">Cytoplasm</location>
    </subcellularLocation>
</comment>
<comment type="similarity">
    <text evidence="2">Belongs to the TRAFAC class translation factor GTPase superfamily. Classic translation factor GTPase family. IF-2 subfamily.</text>
</comment>